<comment type="catalytic activity">
    <reaction evidence="1">
        <text>diphosphate + H2O = 2 phosphate + H(+)</text>
        <dbReference type="Rhea" id="RHEA:24576"/>
        <dbReference type="ChEBI" id="CHEBI:15377"/>
        <dbReference type="ChEBI" id="CHEBI:15378"/>
        <dbReference type="ChEBI" id="CHEBI:33019"/>
        <dbReference type="ChEBI" id="CHEBI:43474"/>
        <dbReference type="EC" id="3.6.1.1"/>
    </reaction>
</comment>
<comment type="cofactor">
    <cofactor evidence="1">
        <name>Mn(2+)</name>
        <dbReference type="ChEBI" id="CHEBI:29035"/>
    </cofactor>
    <text evidence="1">Binds 2 manganese ions per subunit.</text>
</comment>
<comment type="subcellular location">
    <subcellularLocation>
        <location evidence="1">Cytoplasm</location>
    </subcellularLocation>
</comment>
<comment type="similarity">
    <text evidence="1">Belongs to the PPase class C family.</text>
</comment>
<proteinExistence type="inferred from homology"/>
<feature type="chain" id="PRO_1000124658" description="Probable manganese-dependent inorganic pyrophosphatase">
    <location>
        <begin position="1"/>
        <end position="311"/>
    </location>
</feature>
<feature type="binding site" evidence="1">
    <location>
        <position position="9"/>
    </location>
    <ligand>
        <name>Mn(2+)</name>
        <dbReference type="ChEBI" id="CHEBI:29035"/>
        <label>1</label>
    </ligand>
</feature>
<feature type="binding site" evidence="1">
    <location>
        <position position="13"/>
    </location>
    <ligand>
        <name>Mn(2+)</name>
        <dbReference type="ChEBI" id="CHEBI:29035"/>
        <label>1</label>
    </ligand>
</feature>
<feature type="binding site" evidence="1">
    <location>
        <position position="15"/>
    </location>
    <ligand>
        <name>Mn(2+)</name>
        <dbReference type="ChEBI" id="CHEBI:29035"/>
        <label>2</label>
    </ligand>
</feature>
<feature type="binding site" evidence="1">
    <location>
        <position position="77"/>
    </location>
    <ligand>
        <name>Mn(2+)</name>
        <dbReference type="ChEBI" id="CHEBI:29035"/>
        <label>1</label>
    </ligand>
</feature>
<feature type="binding site" evidence="1">
    <location>
        <position position="77"/>
    </location>
    <ligand>
        <name>Mn(2+)</name>
        <dbReference type="ChEBI" id="CHEBI:29035"/>
        <label>2</label>
    </ligand>
</feature>
<feature type="binding site" evidence="1">
    <location>
        <position position="99"/>
    </location>
    <ligand>
        <name>Mn(2+)</name>
        <dbReference type="ChEBI" id="CHEBI:29035"/>
        <label>2</label>
    </ligand>
</feature>
<feature type="binding site" evidence="1">
    <location>
        <position position="151"/>
    </location>
    <ligand>
        <name>Mn(2+)</name>
        <dbReference type="ChEBI" id="CHEBI:29035"/>
        <label>2</label>
    </ligand>
</feature>
<sequence>MSKLLVFGHQNPDTDAIASSYAFDYLAKKAFDLDTEVVALGDPNEETAFALDYFGVSAPRVVTSAKAEGASHVILTDHNEFPQSISDIREVEVYGIVDHHRVANFETANPLYMRVEPVGSASSIVYRLFKENRVDVPKDIAGMLLSGLISDTLLLKSPTTHASDHRVAAELAELAGVKLEEYGMAMLKAGTNLASKSEAELIDIDAKTFELNGNAVRVAQVNTVDIAEVLERKEAIEAAIREVMASEGYSDFVLMITDIVNSNSEILALGANMDKVEAAFSFKLEDNHAFLAGAVSRKKQVVPQLTESFGA</sequence>
<organism>
    <name type="scientific">Streptococcus equi subsp. equi (strain 4047)</name>
    <dbReference type="NCBI Taxonomy" id="553482"/>
    <lineage>
        <taxon>Bacteria</taxon>
        <taxon>Bacillati</taxon>
        <taxon>Bacillota</taxon>
        <taxon>Bacilli</taxon>
        <taxon>Lactobacillales</taxon>
        <taxon>Streptococcaceae</taxon>
        <taxon>Streptococcus</taxon>
    </lineage>
</organism>
<gene>
    <name evidence="1" type="primary">ppaC</name>
    <name type="ordered locus">SEQ_1841</name>
</gene>
<protein>
    <recommendedName>
        <fullName evidence="1">Probable manganese-dependent inorganic pyrophosphatase</fullName>
        <ecNumber evidence="1">3.6.1.1</ecNumber>
    </recommendedName>
    <alternativeName>
        <fullName evidence="1">Pyrophosphate phospho-hydrolase</fullName>
        <shortName evidence="1">PPase</shortName>
    </alternativeName>
</protein>
<keyword id="KW-0963">Cytoplasm</keyword>
<keyword id="KW-0378">Hydrolase</keyword>
<keyword id="KW-0464">Manganese</keyword>
<keyword id="KW-0479">Metal-binding</keyword>
<name>PPAC_STRE4</name>
<reference key="1">
    <citation type="journal article" date="2009" name="PLoS Pathog.">
        <title>Genomic evidence for the evolution of Streptococcus equi: host restriction, increased virulence, and genetic exchange with human pathogens.</title>
        <authorList>
            <person name="Holden M.T.G."/>
            <person name="Heather Z."/>
            <person name="Paillot R."/>
            <person name="Steward K.F."/>
            <person name="Webb K."/>
            <person name="Ainslie F."/>
            <person name="Jourdan T."/>
            <person name="Bason N.C."/>
            <person name="Holroyd N.E."/>
            <person name="Mungall K."/>
            <person name="Quail M.A."/>
            <person name="Sanders M."/>
            <person name="Simmonds M."/>
            <person name="Willey D."/>
            <person name="Brooks K."/>
            <person name="Aanensen D.M."/>
            <person name="Spratt B.G."/>
            <person name="Jolley K.A."/>
            <person name="Maiden M.C.J."/>
            <person name="Kehoe M."/>
            <person name="Chanter N."/>
            <person name="Bentley S.D."/>
            <person name="Robinson C."/>
            <person name="Maskell D.J."/>
            <person name="Parkhill J."/>
            <person name="Waller A.S."/>
        </authorList>
    </citation>
    <scope>NUCLEOTIDE SEQUENCE [LARGE SCALE GENOMIC DNA]</scope>
    <source>
        <strain>4047</strain>
    </source>
</reference>
<dbReference type="EC" id="3.6.1.1" evidence="1"/>
<dbReference type="EMBL" id="FM204883">
    <property type="protein sequence ID" value="CAW94998.1"/>
    <property type="molecule type" value="Genomic_DNA"/>
</dbReference>
<dbReference type="RefSeq" id="WP_012680041.1">
    <property type="nucleotide sequence ID" value="NC_012471.1"/>
</dbReference>
<dbReference type="SMR" id="C0M7N7"/>
<dbReference type="KEGG" id="seu:SEQ_1841"/>
<dbReference type="HOGENOM" id="CLU_025243_0_1_9"/>
<dbReference type="OrthoDB" id="9766150at2"/>
<dbReference type="Proteomes" id="UP000001365">
    <property type="component" value="Chromosome"/>
</dbReference>
<dbReference type="GO" id="GO:0005737">
    <property type="term" value="C:cytoplasm"/>
    <property type="evidence" value="ECO:0007669"/>
    <property type="project" value="UniProtKB-SubCell"/>
</dbReference>
<dbReference type="GO" id="GO:0004427">
    <property type="term" value="F:inorganic diphosphate phosphatase activity"/>
    <property type="evidence" value="ECO:0007669"/>
    <property type="project" value="UniProtKB-UniRule"/>
</dbReference>
<dbReference type="GO" id="GO:0030145">
    <property type="term" value="F:manganese ion binding"/>
    <property type="evidence" value="ECO:0007669"/>
    <property type="project" value="UniProtKB-UniRule"/>
</dbReference>
<dbReference type="FunFam" id="3.10.310.20:FF:000001">
    <property type="entry name" value="Probable manganese-dependent inorganic pyrophosphatase"/>
    <property type="match status" value="1"/>
</dbReference>
<dbReference type="FunFam" id="3.90.1640.10:FF:000001">
    <property type="entry name" value="Probable manganese-dependent inorganic pyrophosphatase"/>
    <property type="match status" value="1"/>
</dbReference>
<dbReference type="Gene3D" id="3.10.310.20">
    <property type="entry name" value="DHHA2 domain"/>
    <property type="match status" value="1"/>
</dbReference>
<dbReference type="Gene3D" id="3.90.1640.10">
    <property type="entry name" value="inorganic pyrophosphatase (n-terminal core)"/>
    <property type="match status" value="1"/>
</dbReference>
<dbReference type="HAMAP" id="MF_00207">
    <property type="entry name" value="PPase_C"/>
    <property type="match status" value="1"/>
</dbReference>
<dbReference type="InterPro" id="IPR001667">
    <property type="entry name" value="DDH_dom"/>
</dbReference>
<dbReference type="InterPro" id="IPR038763">
    <property type="entry name" value="DHH_sf"/>
</dbReference>
<dbReference type="InterPro" id="IPR004097">
    <property type="entry name" value="DHHA2"/>
</dbReference>
<dbReference type="InterPro" id="IPR038222">
    <property type="entry name" value="DHHA2_dom_sf"/>
</dbReference>
<dbReference type="InterPro" id="IPR022934">
    <property type="entry name" value="Mn-dep_inorganic_PyrPase"/>
</dbReference>
<dbReference type="InterPro" id="IPR051319">
    <property type="entry name" value="Oligoribo/pAp-PDE_c-di-AMP_PDE"/>
</dbReference>
<dbReference type="NCBIfam" id="NF003877">
    <property type="entry name" value="PRK05427.1"/>
    <property type="match status" value="1"/>
</dbReference>
<dbReference type="PANTHER" id="PTHR47618">
    <property type="entry name" value="BIFUNCTIONAL OLIGORIBONUCLEASE AND PAP PHOSPHATASE NRNA"/>
    <property type="match status" value="1"/>
</dbReference>
<dbReference type="PANTHER" id="PTHR47618:SF1">
    <property type="entry name" value="BIFUNCTIONAL OLIGORIBONUCLEASE AND PAP PHOSPHATASE NRNA"/>
    <property type="match status" value="1"/>
</dbReference>
<dbReference type="Pfam" id="PF01368">
    <property type="entry name" value="DHH"/>
    <property type="match status" value="1"/>
</dbReference>
<dbReference type="Pfam" id="PF02833">
    <property type="entry name" value="DHHA2"/>
    <property type="match status" value="1"/>
</dbReference>
<dbReference type="SMART" id="SM01131">
    <property type="entry name" value="DHHA2"/>
    <property type="match status" value="1"/>
</dbReference>
<dbReference type="SUPFAM" id="SSF64182">
    <property type="entry name" value="DHH phosphoesterases"/>
    <property type="match status" value="1"/>
</dbReference>
<accession>C0M7N7</accession>
<evidence type="ECO:0000255" key="1">
    <source>
        <dbReference type="HAMAP-Rule" id="MF_00207"/>
    </source>
</evidence>